<reference key="1">
    <citation type="journal article" date="2005" name="Science">
        <title>The genome of the basidiomycetous yeast and human pathogen Cryptococcus neoformans.</title>
        <authorList>
            <person name="Loftus B.J."/>
            <person name="Fung E."/>
            <person name="Roncaglia P."/>
            <person name="Rowley D."/>
            <person name="Amedeo P."/>
            <person name="Bruno D."/>
            <person name="Vamathevan J."/>
            <person name="Miranda M."/>
            <person name="Anderson I.J."/>
            <person name="Fraser J.A."/>
            <person name="Allen J.E."/>
            <person name="Bosdet I.E."/>
            <person name="Brent M.R."/>
            <person name="Chiu R."/>
            <person name="Doering T.L."/>
            <person name="Donlin M.J."/>
            <person name="D'Souza C.A."/>
            <person name="Fox D.S."/>
            <person name="Grinberg V."/>
            <person name="Fu J."/>
            <person name="Fukushima M."/>
            <person name="Haas B.J."/>
            <person name="Huang J.C."/>
            <person name="Janbon G."/>
            <person name="Jones S.J.M."/>
            <person name="Koo H.L."/>
            <person name="Krzywinski M.I."/>
            <person name="Kwon-Chung K.J."/>
            <person name="Lengeler K.B."/>
            <person name="Maiti R."/>
            <person name="Marra M.A."/>
            <person name="Marra R.E."/>
            <person name="Mathewson C.A."/>
            <person name="Mitchell T.G."/>
            <person name="Pertea M."/>
            <person name="Riggs F.R."/>
            <person name="Salzberg S.L."/>
            <person name="Schein J.E."/>
            <person name="Shvartsbeyn A."/>
            <person name="Shin H."/>
            <person name="Shumway M."/>
            <person name="Specht C.A."/>
            <person name="Suh B.B."/>
            <person name="Tenney A."/>
            <person name="Utterback T.R."/>
            <person name="Wickes B.L."/>
            <person name="Wortman J.R."/>
            <person name="Wye N.H."/>
            <person name="Kronstad J.W."/>
            <person name="Lodge J.K."/>
            <person name="Heitman J."/>
            <person name="Davis R.W."/>
            <person name="Fraser C.M."/>
            <person name="Hyman R.W."/>
        </authorList>
    </citation>
    <scope>NUCLEOTIDE SEQUENCE [LARGE SCALE GENOMIC DNA]</scope>
    <source>
        <strain>JEC21 / ATCC MYA-565</strain>
    </source>
</reference>
<keyword id="KW-0539">Nucleus</keyword>
<keyword id="KW-1185">Reference proteome</keyword>
<keyword id="KW-0687">Ribonucleoprotein</keyword>
<keyword id="KW-0690">Ribosome biogenesis</keyword>
<keyword id="KW-0698">rRNA processing</keyword>
<comment type="function">
    <text evidence="1">Involved in the biogenesis of the 60S ribosomal subunit. May play a part in the quality control of pre-60S particles (By similarity).</text>
</comment>
<comment type="subunit">
    <text evidence="2">Component of the pre-66S ribosomal particle. Interacts with NOP7 and RRP1. Interacts with RSA4 (via WD repeats).</text>
</comment>
<comment type="subcellular location">
    <subcellularLocation>
        <location evidence="1">Nucleus</location>
        <location evidence="1">Nucleolus</location>
    </subcellularLocation>
</comment>
<comment type="similarity">
    <text evidence="5">Belongs to the eukaryotic ribosomal protein eS8 family. Ribosome biogenesis protein NSA2 subfamily.</text>
</comment>
<sequence>MPQNEYMEEHRKRHGRRLDYEEKKRKRTAREAHKASADAQKIFGHKAKLHHARRHAEKVQMKKTLKAHDERNVKQKDDGAVKEGALPAYLLDRDGQKDAKALSSAVKDRRKDRAAKYSVPLPKVRGIAEEEMFKVIKTGKSKSKSWKRMVNKATFVGEGFTRKPVKLERFIRPMGLRMTKANVTHPELKTTFQLPILGVKKNPQSPLYTSLGVLTKGTILEVNVSELGMVTTGGKVVWSKYAQITNNPENDGCINSVLLV</sequence>
<organism>
    <name type="scientific">Cryptococcus neoformans var. neoformans serotype D (strain JEC21 / ATCC MYA-565)</name>
    <name type="common">Filobasidiella neoformans</name>
    <dbReference type="NCBI Taxonomy" id="214684"/>
    <lineage>
        <taxon>Eukaryota</taxon>
        <taxon>Fungi</taxon>
        <taxon>Dikarya</taxon>
        <taxon>Basidiomycota</taxon>
        <taxon>Agaricomycotina</taxon>
        <taxon>Tremellomycetes</taxon>
        <taxon>Tremellales</taxon>
        <taxon>Cryptococcaceae</taxon>
        <taxon>Cryptococcus</taxon>
        <taxon>Cryptococcus neoformans species complex</taxon>
    </lineage>
</organism>
<feature type="chain" id="PRO_0000320415" description="Ribosome biogenesis protein NSA2">
    <location>
        <begin position="1"/>
        <end position="260"/>
    </location>
</feature>
<feature type="region of interest" description="Disordered" evidence="4">
    <location>
        <begin position="1"/>
        <end position="37"/>
    </location>
</feature>
<feature type="region of interest" description="Disordered" evidence="4">
    <location>
        <begin position="60"/>
        <end position="79"/>
    </location>
</feature>
<feature type="short sequence motif" description="Nuclear localization signal" evidence="3">
    <location>
        <begin position="11"/>
        <end position="18"/>
    </location>
</feature>
<feature type="compositionally biased region" description="Basic and acidic residues" evidence="4">
    <location>
        <begin position="17"/>
        <end position="36"/>
    </location>
</feature>
<feature type="compositionally biased region" description="Basic and acidic residues" evidence="4">
    <location>
        <begin position="66"/>
        <end position="79"/>
    </location>
</feature>
<accession>P0CQ60</accession>
<accession>Q55IA1</accession>
<accession>Q5K7T7</accession>
<name>NSA2_CRYNJ</name>
<proteinExistence type="inferred from homology"/>
<gene>
    <name type="primary">NSA2</name>
    <name type="ordered locus">CNM01320</name>
</gene>
<evidence type="ECO:0000250" key="1"/>
<evidence type="ECO:0000250" key="2">
    <source>
        <dbReference type="UniProtKB" id="P40078"/>
    </source>
</evidence>
<evidence type="ECO:0000255" key="3">
    <source>
        <dbReference type="PROSITE-ProRule" id="PRU00768"/>
    </source>
</evidence>
<evidence type="ECO:0000256" key="4">
    <source>
        <dbReference type="SAM" id="MobiDB-lite"/>
    </source>
</evidence>
<evidence type="ECO:0000305" key="5"/>
<dbReference type="EMBL" id="AE017353">
    <property type="protein sequence ID" value="AAW46920.2"/>
    <property type="molecule type" value="Genomic_DNA"/>
</dbReference>
<dbReference type="RefSeq" id="XP_568437.1">
    <property type="nucleotide sequence ID" value="XM_568437.1"/>
</dbReference>
<dbReference type="SMR" id="P0CQ60"/>
<dbReference type="FunCoup" id="P0CQ60">
    <property type="interactions" value="494"/>
</dbReference>
<dbReference type="STRING" id="214684.P0CQ60"/>
<dbReference type="PaxDb" id="214684-P0CQ60"/>
<dbReference type="EnsemblFungi" id="AAW46920">
    <property type="protein sequence ID" value="AAW46920"/>
    <property type="gene ID" value="CNM01320"/>
</dbReference>
<dbReference type="eggNOG" id="KOG3163">
    <property type="taxonomic scope" value="Eukaryota"/>
</dbReference>
<dbReference type="HOGENOM" id="CLU_1070048_0_0_1"/>
<dbReference type="InParanoid" id="P0CQ60"/>
<dbReference type="Proteomes" id="UP000002149">
    <property type="component" value="Chromosome 13"/>
</dbReference>
<dbReference type="GO" id="GO:0005730">
    <property type="term" value="C:nucleolus"/>
    <property type="evidence" value="ECO:0007669"/>
    <property type="project" value="UniProtKB-SubCell"/>
</dbReference>
<dbReference type="GO" id="GO:0030687">
    <property type="term" value="C:preribosome, large subunit precursor"/>
    <property type="evidence" value="ECO:0000318"/>
    <property type="project" value="GO_Central"/>
</dbReference>
<dbReference type="GO" id="GO:0000460">
    <property type="term" value="P:maturation of 5.8S rRNA"/>
    <property type="evidence" value="ECO:0000318"/>
    <property type="project" value="GO_Central"/>
</dbReference>
<dbReference type="GO" id="GO:0000466">
    <property type="term" value="P:maturation of 5.8S rRNA from tricistronic rRNA transcript (SSU-rRNA, 5.8S rRNA, LSU-rRNA)"/>
    <property type="evidence" value="ECO:0007669"/>
    <property type="project" value="EnsemblFungi"/>
</dbReference>
<dbReference type="GO" id="GO:0000470">
    <property type="term" value="P:maturation of LSU-rRNA"/>
    <property type="evidence" value="ECO:0000318"/>
    <property type="project" value="GO_Central"/>
</dbReference>
<dbReference type="GO" id="GO:0000463">
    <property type="term" value="P:maturation of LSU-rRNA from tricistronic rRNA transcript (SSU-rRNA, 5.8S rRNA, LSU-rRNA)"/>
    <property type="evidence" value="ECO:0007669"/>
    <property type="project" value="EnsemblFungi"/>
</dbReference>
<dbReference type="CDD" id="cd11381">
    <property type="entry name" value="NSA2"/>
    <property type="match status" value="1"/>
</dbReference>
<dbReference type="FunFam" id="2.40.10.310:FF:000001">
    <property type="entry name" value="NSA2, ribosome biogenesis homolog"/>
    <property type="match status" value="1"/>
</dbReference>
<dbReference type="Gene3D" id="2.40.10.310">
    <property type="match status" value="1"/>
</dbReference>
<dbReference type="InterPro" id="IPR039411">
    <property type="entry name" value="NSA2_fam"/>
</dbReference>
<dbReference type="InterPro" id="IPR022309">
    <property type="entry name" value="Ribosomal_Se8/biogenesis_NSA2"/>
</dbReference>
<dbReference type="PANTHER" id="PTHR12642">
    <property type="entry name" value="RIBOSOME BIOGENESIS PROTEIN NSA2 HOMOLOG"/>
    <property type="match status" value="1"/>
</dbReference>
<dbReference type="Pfam" id="PF01201">
    <property type="entry name" value="Ribosomal_S8e"/>
    <property type="match status" value="1"/>
</dbReference>
<protein>
    <recommendedName>
        <fullName>Ribosome biogenesis protein NSA2</fullName>
    </recommendedName>
</protein>